<proteinExistence type="evidence at protein level"/>
<gene>
    <name type="primary">nudJ</name>
    <name type="synonym">ymfB</name>
    <name type="ordered locus">b1134</name>
    <name type="ordered locus">JW1120</name>
</gene>
<protein>
    <recommendedName>
        <fullName>Phosphatase NudJ</fullName>
        <ecNumber>3.6.1.-</ecNumber>
    </recommendedName>
</protein>
<name>NUDJ_ECOLI</name>
<organism>
    <name type="scientific">Escherichia coli (strain K12)</name>
    <dbReference type="NCBI Taxonomy" id="83333"/>
    <lineage>
        <taxon>Bacteria</taxon>
        <taxon>Pseudomonadati</taxon>
        <taxon>Pseudomonadota</taxon>
        <taxon>Gammaproteobacteria</taxon>
        <taxon>Enterobacterales</taxon>
        <taxon>Enterobacteriaceae</taxon>
        <taxon>Escherichia</taxon>
    </lineage>
</organism>
<evidence type="ECO:0000255" key="1">
    <source>
        <dbReference type="PROSITE-ProRule" id="PRU00794"/>
    </source>
</evidence>
<evidence type="ECO:0000269" key="2">
    <source>
    </source>
</evidence>
<evidence type="ECO:0000269" key="3">
    <source>
    </source>
</evidence>
<evidence type="ECO:0000305" key="4"/>
<accession>P0AEI6</accession>
<accession>P75965</accession>
<sequence length="153" mass="17433">MFKPHVTVACVVHAEGKFLVVEETINGKALWNQPAGHLEADETLVEAAARELWEETGISAQPQHFIRMHQWIAPDKTPFLRFLFAIELEQICPTQPHDSDIDCCRWVSAEEILQASNLRSPLVAESIRCYQSGQRYPLEMIGDFNWPFTKGVI</sequence>
<feature type="chain" id="PRO_0000057069" description="Phosphatase NudJ">
    <location>
        <begin position="1"/>
        <end position="153"/>
    </location>
</feature>
<feature type="domain" description="Nudix hydrolase" evidence="1">
    <location>
        <begin position="3"/>
        <end position="131"/>
    </location>
</feature>
<feature type="short sequence motif" description="Nudix box">
    <location>
        <begin position="36"/>
        <end position="57"/>
    </location>
</feature>
<reference key="1">
    <citation type="journal article" date="1996" name="DNA Res.">
        <title>A 718-kb DNA sequence of the Escherichia coli K-12 genome corresponding to the 12.7-28.0 min region on the linkage map.</title>
        <authorList>
            <person name="Oshima T."/>
            <person name="Aiba H."/>
            <person name="Baba T."/>
            <person name="Fujita K."/>
            <person name="Hayashi K."/>
            <person name="Honjo A."/>
            <person name="Ikemoto K."/>
            <person name="Inada T."/>
            <person name="Itoh T."/>
            <person name="Kajihara M."/>
            <person name="Kanai K."/>
            <person name="Kashimoto K."/>
            <person name="Kimura S."/>
            <person name="Kitagawa M."/>
            <person name="Makino K."/>
            <person name="Masuda S."/>
            <person name="Miki T."/>
            <person name="Mizobuchi K."/>
            <person name="Mori H."/>
            <person name="Motomura K."/>
            <person name="Nakamura Y."/>
            <person name="Nashimoto H."/>
            <person name="Nishio Y."/>
            <person name="Saito N."/>
            <person name="Sampei G."/>
            <person name="Seki Y."/>
            <person name="Tagami H."/>
            <person name="Takemoto K."/>
            <person name="Wada C."/>
            <person name="Yamamoto Y."/>
            <person name="Yano M."/>
            <person name="Horiuchi T."/>
        </authorList>
    </citation>
    <scope>NUCLEOTIDE SEQUENCE [LARGE SCALE GENOMIC DNA]</scope>
    <source>
        <strain>K12 / W3110 / ATCC 27325 / DSM 5911</strain>
    </source>
</reference>
<reference key="2">
    <citation type="journal article" date="1997" name="Science">
        <title>The complete genome sequence of Escherichia coli K-12.</title>
        <authorList>
            <person name="Blattner F.R."/>
            <person name="Plunkett G. III"/>
            <person name="Bloch C.A."/>
            <person name="Perna N.T."/>
            <person name="Burland V."/>
            <person name="Riley M."/>
            <person name="Collado-Vides J."/>
            <person name="Glasner J.D."/>
            <person name="Rode C.K."/>
            <person name="Mayhew G.F."/>
            <person name="Gregor J."/>
            <person name="Davis N.W."/>
            <person name="Kirkpatrick H.A."/>
            <person name="Goeden M.A."/>
            <person name="Rose D.J."/>
            <person name="Mau B."/>
            <person name="Shao Y."/>
        </authorList>
    </citation>
    <scope>NUCLEOTIDE SEQUENCE [LARGE SCALE GENOMIC DNA]</scope>
    <source>
        <strain>K12 / MG1655 / ATCC 47076</strain>
    </source>
</reference>
<reference key="3">
    <citation type="journal article" date="2006" name="Mol. Syst. Biol.">
        <title>Highly accurate genome sequences of Escherichia coli K-12 strains MG1655 and W3110.</title>
        <authorList>
            <person name="Hayashi K."/>
            <person name="Morooka N."/>
            <person name="Yamamoto Y."/>
            <person name="Fujita K."/>
            <person name="Isono K."/>
            <person name="Choi S."/>
            <person name="Ohtsubo E."/>
            <person name="Baba T."/>
            <person name="Wanner B.L."/>
            <person name="Mori H."/>
            <person name="Horiuchi T."/>
        </authorList>
    </citation>
    <scope>NUCLEOTIDE SEQUENCE [LARGE SCALE GENOMIC DNA]</scope>
    <source>
        <strain>K12 / W3110 / ATCC 27325 / DSM 5911</strain>
    </source>
</reference>
<reference key="4">
    <citation type="journal article" date="2004" name="J. Biol. Chem.">
        <title>A genetic screen for the identification of thiamin metabolic genes.</title>
        <authorList>
            <person name="Lawhorn B.G."/>
            <person name="Gerdes S.Y."/>
            <person name="Begley T.P."/>
        </authorList>
    </citation>
    <scope>FUNCTION</scope>
    <scope>CATALYTIC ACTIVITY</scope>
    <source>
        <strain>K12 / MG1655 / ATCC 47076</strain>
    </source>
</reference>
<reference key="5">
    <citation type="journal article" date="2006" name="J. Biol. Chem.">
        <title>Three new Nudix hydrolases from Escherichia coli.</title>
        <authorList>
            <person name="Xu W."/>
            <person name="Dunn C.A."/>
            <person name="O'Handley S.F."/>
            <person name="Smith D.L."/>
            <person name="Bessman M.J."/>
        </authorList>
    </citation>
    <scope>FUNCTION</scope>
    <scope>COFACTOR</scope>
    <scope>BIOPHYSICOCHEMICAL PROPERTIES</scope>
    <scope>SUBUNIT</scope>
    <source>
        <strain>K12 / MG1655 / ATCC 47076</strain>
    </source>
</reference>
<dbReference type="EC" id="3.6.1.-"/>
<dbReference type="EMBL" id="U00096">
    <property type="protein sequence ID" value="AAC74218.1"/>
    <property type="molecule type" value="Genomic_DNA"/>
</dbReference>
<dbReference type="EMBL" id="AP009048">
    <property type="protein sequence ID" value="BAA35956.1"/>
    <property type="molecule type" value="Genomic_DNA"/>
</dbReference>
<dbReference type="PIR" id="C64858">
    <property type="entry name" value="C64858"/>
</dbReference>
<dbReference type="RefSeq" id="NP_415652.1">
    <property type="nucleotide sequence ID" value="NC_000913.3"/>
</dbReference>
<dbReference type="RefSeq" id="WP_000476093.1">
    <property type="nucleotide sequence ID" value="NZ_STEB01000016.1"/>
</dbReference>
<dbReference type="SMR" id="P0AEI6"/>
<dbReference type="BioGRID" id="4263128">
    <property type="interactions" value="48"/>
</dbReference>
<dbReference type="BioGRID" id="850061">
    <property type="interactions" value="1"/>
</dbReference>
<dbReference type="DIP" id="DIP-35908N"/>
<dbReference type="FunCoup" id="P0AEI6">
    <property type="interactions" value="38"/>
</dbReference>
<dbReference type="IntAct" id="P0AEI6">
    <property type="interactions" value="5"/>
</dbReference>
<dbReference type="STRING" id="511145.b1134"/>
<dbReference type="jPOST" id="P0AEI6"/>
<dbReference type="PaxDb" id="511145-b1134"/>
<dbReference type="EnsemblBacteria" id="AAC74218">
    <property type="protein sequence ID" value="AAC74218"/>
    <property type="gene ID" value="b1134"/>
</dbReference>
<dbReference type="GeneID" id="75203720"/>
<dbReference type="GeneID" id="945689"/>
<dbReference type="KEGG" id="ecj:JW1120"/>
<dbReference type="KEGG" id="eco:b1134"/>
<dbReference type="KEGG" id="ecoc:C3026_06820"/>
<dbReference type="PATRIC" id="fig|1411691.4.peg.1132"/>
<dbReference type="EchoBASE" id="EB3220"/>
<dbReference type="eggNOG" id="COG1051">
    <property type="taxonomic scope" value="Bacteria"/>
</dbReference>
<dbReference type="HOGENOM" id="CLU_037162_6_1_6"/>
<dbReference type="InParanoid" id="P0AEI6"/>
<dbReference type="OMA" id="IVRTVWM"/>
<dbReference type="OrthoDB" id="8594221at2"/>
<dbReference type="PhylomeDB" id="P0AEI6"/>
<dbReference type="BioCyc" id="EcoCyc:G6580-MONOMER"/>
<dbReference type="BioCyc" id="MetaCyc:G6580-MONOMER"/>
<dbReference type="PRO" id="PR:P0AEI6"/>
<dbReference type="Proteomes" id="UP000000625">
    <property type="component" value="Chromosome"/>
</dbReference>
<dbReference type="GO" id="GO:0002145">
    <property type="term" value="F:4-amino-5-hydroxymethyl-2-methylpyrimidine diphosphatase activity"/>
    <property type="evidence" value="ECO:0007669"/>
    <property type="project" value="RHEA"/>
</dbReference>
<dbReference type="GO" id="GO:0017110">
    <property type="term" value="F:nucleoside diphosphate phosphatase activity"/>
    <property type="evidence" value="ECO:0000314"/>
    <property type="project" value="EcoCyc"/>
</dbReference>
<dbReference type="GO" id="GO:0016462">
    <property type="term" value="F:pyrophosphatase activity"/>
    <property type="evidence" value="ECO:0000314"/>
    <property type="project" value="EcoCyc"/>
</dbReference>
<dbReference type="GO" id="GO:0017111">
    <property type="term" value="F:ribonucleoside triphosphate phosphatase activity"/>
    <property type="evidence" value="ECO:0000314"/>
    <property type="project" value="EcoCyc"/>
</dbReference>
<dbReference type="GO" id="GO:0004787">
    <property type="term" value="F:thiamine diphosphate phosphatase activity"/>
    <property type="evidence" value="ECO:0000314"/>
    <property type="project" value="EcoCyc"/>
</dbReference>
<dbReference type="CDD" id="cd03675">
    <property type="entry name" value="NUDIX_Hydrolase"/>
    <property type="match status" value="1"/>
</dbReference>
<dbReference type="FunFam" id="3.90.79.10:FF:000017">
    <property type="entry name" value="Phosphatase NudJ"/>
    <property type="match status" value="1"/>
</dbReference>
<dbReference type="Gene3D" id="3.90.79.10">
    <property type="entry name" value="Nucleoside Triphosphate Pyrophosphohydrolase"/>
    <property type="match status" value="1"/>
</dbReference>
<dbReference type="InterPro" id="IPR020476">
    <property type="entry name" value="Nudix_hydrolase"/>
</dbReference>
<dbReference type="InterPro" id="IPR015797">
    <property type="entry name" value="NUDIX_hydrolase-like_dom_sf"/>
</dbReference>
<dbReference type="InterPro" id="IPR020084">
    <property type="entry name" value="NUDIX_hydrolase_CS"/>
</dbReference>
<dbReference type="InterPro" id="IPR000086">
    <property type="entry name" value="NUDIX_hydrolase_dom"/>
</dbReference>
<dbReference type="InterPro" id="IPR033713">
    <property type="entry name" value="NudJ"/>
</dbReference>
<dbReference type="PANTHER" id="PTHR43222">
    <property type="entry name" value="NUDIX HYDROLASE 23"/>
    <property type="match status" value="1"/>
</dbReference>
<dbReference type="PANTHER" id="PTHR43222:SF11">
    <property type="entry name" value="PHOSPHATASE NUDJ"/>
    <property type="match status" value="1"/>
</dbReference>
<dbReference type="Pfam" id="PF00293">
    <property type="entry name" value="NUDIX"/>
    <property type="match status" value="1"/>
</dbReference>
<dbReference type="PRINTS" id="PR00502">
    <property type="entry name" value="NUDIXFAMILY"/>
</dbReference>
<dbReference type="SUPFAM" id="SSF55811">
    <property type="entry name" value="Nudix"/>
    <property type="match status" value="1"/>
</dbReference>
<dbReference type="PROSITE" id="PS51462">
    <property type="entry name" value="NUDIX"/>
    <property type="match status" value="1"/>
</dbReference>
<dbReference type="PROSITE" id="PS00893">
    <property type="entry name" value="NUDIX_BOX"/>
    <property type="match status" value="1"/>
</dbReference>
<comment type="function">
    <text evidence="2 3">Catalyzes the hydrolysis of 4-amino-2-methyl-5-hydroxymethylpyrimidine pyrophosphate (HMP-PP) to 4-amino-2-methyl-5-hydroxymethylpyrimidine phosphate (HMP-P), and hydrolysis of thiamine pyrophosphate (TPP) to thiamine monophosphate (TMP). Can hydrolyze other substrates such as MeO-HMP-PP, CF(3)-HMP-PP and MeO-TPP. Is also a non-specific nucleoside tri- and diphosphatase that releases inorganic orthophosphate.</text>
</comment>
<comment type="catalytic activity">
    <reaction evidence="2">
        <text>4-amino-2-methyl-5-(diphosphooxymethyl)pyrimidine + H2O = 4-amino-2-methyl-5-(phosphooxymethyl)pyrimidine + phosphate + H(+)</text>
        <dbReference type="Rhea" id="RHEA:27914"/>
        <dbReference type="ChEBI" id="CHEBI:15377"/>
        <dbReference type="ChEBI" id="CHEBI:15378"/>
        <dbReference type="ChEBI" id="CHEBI:43474"/>
        <dbReference type="ChEBI" id="CHEBI:57841"/>
        <dbReference type="ChEBI" id="CHEBI:58354"/>
    </reaction>
</comment>
<comment type="catalytic activity">
    <reaction evidence="2">
        <text>thiamine diphosphate + H2O = thiamine phosphate + phosphate + H(+)</text>
        <dbReference type="Rhea" id="RHEA:27998"/>
        <dbReference type="ChEBI" id="CHEBI:15377"/>
        <dbReference type="ChEBI" id="CHEBI:15378"/>
        <dbReference type="ChEBI" id="CHEBI:37575"/>
        <dbReference type="ChEBI" id="CHEBI:43474"/>
        <dbReference type="ChEBI" id="CHEBI:58937"/>
    </reaction>
</comment>
<comment type="cofactor">
    <cofactor evidence="3">
        <name>Mg(2+)</name>
        <dbReference type="ChEBI" id="CHEBI:18420"/>
    </cofactor>
</comment>
<comment type="biophysicochemical properties">
    <kinetics>
        <KM evidence="3">0.64 mM for GDP</KM>
        <Vmax evidence="3">12.0 umol/min/mg enzyme with GDP as substrate</Vmax>
    </kinetics>
    <phDependence>
        <text evidence="3">Optimum pH is about 8.5.</text>
    </phDependence>
</comment>
<comment type="subunit">
    <text evidence="3">Monomer.</text>
</comment>
<comment type="similarity">
    <text evidence="4">Belongs to the Nudix hydrolase family. NudJ subfamily.</text>
</comment>
<keyword id="KW-0378">Hydrolase</keyword>
<keyword id="KW-0460">Magnesium</keyword>
<keyword id="KW-1185">Reference proteome</keyword>